<comment type="function">
    <text evidence="1">An accessory protein needed during the final step in the assembly of 30S ribosomal subunit, possibly for assembly of the head region. Essential for efficient processing of 16S rRNA. May be needed both before and after RbfA during the maturation of 16S rRNA. It has affinity for free ribosomal 30S subunits but not for 70S ribosomes.</text>
</comment>
<comment type="subunit">
    <text evidence="1">Binds ribosomal protein uS19.</text>
</comment>
<comment type="subcellular location">
    <subcellularLocation>
        <location evidence="1">Cytoplasm</location>
    </subcellularLocation>
</comment>
<comment type="domain">
    <text evidence="1">The PRC barrel domain binds ribosomal protein uS19.</text>
</comment>
<comment type="similarity">
    <text evidence="1">Belongs to the RimM family.</text>
</comment>
<reference key="1">
    <citation type="journal article" date="2004" name="Proc. Natl. Acad. Sci. U.S.A.">
        <title>Genomic analysis of Bacteroides fragilis reveals extensive DNA inversions regulating cell surface adaptation.</title>
        <authorList>
            <person name="Kuwahara T."/>
            <person name="Yamashita A."/>
            <person name="Hirakawa H."/>
            <person name="Nakayama H."/>
            <person name="Toh H."/>
            <person name="Okada N."/>
            <person name="Kuhara S."/>
            <person name="Hattori M."/>
            <person name="Hayashi T."/>
            <person name="Ohnishi Y."/>
        </authorList>
    </citation>
    <scope>NUCLEOTIDE SEQUENCE [LARGE SCALE GENOMIC DNA]</scope>
    <source>
        <strain>YCH46</strain>
    </source>
</reference>
<name>RIMM_BACFR</name>
<gene>
    <name evidence="1" type="primary">rimM</name>
    <name type="ordered locus">BF3701</name>
</gene>
<keyword id="KW-0143">Chaperone</keyword>
<keyword id="KW-0963">Cytoplasm</keyword>
<keyword id="KW-0690">Ribosome biogenesis</keyword>
<keyword id="KW-0698">rRNA processing</keyword>
<evidence type="ECO:0000255" key="1">
    <source>
        <dbReference type="HAMAP-Rule" id="MF_00014"/>
    </source>
</evidence>
<protein>
    <recommendedName>
        <fullName evidence="1">Ribosome maturation factor RimM</fullName>
    </recommendedName>
</protein>
<sequence length="180" mass="20499">MIKREDVYKIGLFNKPHGIHGELSFTFTDDIFDRADCDYLICRLDDIFVPFFIEEYRFRSDSTALVKLEGVDTAERARMFTNVEVYFPVKHAEEAGPGELSWDFFVGFRVEDVRHGALGKVTDVDTSTVNTLFVVDRDGDELLIPAQEELIAGIDQKHKIITVDLPEGLLSLDECDDEES</sequence>
<dbReference type="EMBL" id="AP006841">
    <property type="protein sequence ID" value="BAD50444.1"/>
    <property type="molecule type" value="Genomic_DNA"/>
</dbReference>
<dbReference type="RefSeq" id="WP_008657443.1">
    <property type="nucleotide sequence ID" value="NC_006347.1"/>
</dbReference>
<dbReference type="RefSeq" id="YP_100978.1">
    <property type="nucleotide sequence ID" value="NC_006347.1"/>
</dbReference>
<dbReference type="SMR" id="Q64PY7"/>
<dbReference type="STRING" id="295405.BF3701"/>
<dbReference type="GeneID" id="60368549"/>
<dbReference type="KEGG" id="bfr:BF3701"/>
<dbReference type="PATRIC" id="fig|295405.11.peg.3552"/>
<dbReference type="HOGENOM" id="CLU_077636_4_1_10"/>
<dbReference type="OrthoDB" id="9810331at2"/>
<dbReference type="Proteomes" id="UP000002197">
    <property type="component" value="Chromosome"/>
</dbReference>
<dbReference type="GO" id="GO:0005737">
    <property type="term" value="C:cytoplasm"/>
    <property type="evidence" value="ECO:0007669"/>
    <property type="project" value="UniProtKB-SubCell"/>
</dbReference>
<dbReference type="GO" id="GO:0005840">
    <property type="term" value="C:ribosome"/>
    <property type="evidence" value="ECO:0007669"/>
    <property type="project" value="InterPro"/>
</dbReference>
<dbReference type="GO" id="GO:0043022">
    <property type="term" value="F:ribosome binding"/>
    <property type="evidence" value="ECO:0007669"/>
    <property type="project" value="InterPro"/>
</dbReference>
<dbReference type="GO" id="GO:0042274">
    <property type="term" value="P:ribosomal small subunit biogenesis"/>
    <property type="evidence" value="ECO:0007669"/>
    <property type="project" value="UniProtKB-UniRule"/>
</dbReference>
<dbReference type="GO" id="GO:0006364">
    <property type="term" value="P:rRNA processing"/>
    <property type="evidence" value="ECO:0007669"/>
    <property type="project" value="UniProtKB-UniRule"/>
</dbReference>
<dbReference type="Gene3D" id="2.30.30.240">
    <property type="entry name" value="PRC-barrel domain"/>
    <property type="match status" value="1"/>
</dbReference>
<dbReference type="Gene3D" id="2.40.30.60">
    <property type="entry name" value="RimM"/>
    <property type="match status" value="1"/>
</dbReference>
<dbReference type="HAMAP" id="MF_00014">
    <property type="entry name" value="Ribosome_mat_RimM"/>
    <property type="match status" value="1"/>
</dbReference>
<dbReference type="InterPro" id="IPR011033">
    <property type="entry name" value="PRC_barrel-like_sf"/>
</dbReference>
<dbReference type="InterPro" id="IPR056792">
    <property type="entry name" value="PRC_RimM"/>
</dbReference>
<dbReference type="InterPro" id="IPR011961">
    <property type="entry name" value="RimM"/>
</dbReference>
<dbReference type="InterPro" id="IPR002676">
    <property type="entry name" value="RimM_N"/>
</dbReference>
<dbReference type="InterPro" id="IPR036976">
    <property type="entry name" value="RimM_N_sf"/>
</dbReference>
<dbReference type="InterPro" id="IPR009000">
    <property type="entry name" value="Transl_B-barrel_sf"/>
</dbReference>
<dbReference type="NCBIfam" id="TIGR02273">
    <property type="entry name" value="16S_RimM"/>
    <property type="match status" value="1"/>
</dbReference>
<dbReference type="PANTHER" id="PTHR33692">
    <property type="entry name" value="RIBOSOME MATURATION FACTOR RIMM"/>
    <property type="match status" value="1"/>
</dbReference>
<dbReference type="PANTHER" id="PTHR33692:SF1">
    <property type="entry name" value="RIBOSOME MATURATION FACTOR RIMM"/>
    <property type="match status" value="1"/>
</dbReference>
<dbReference type="Pfam" id="PF24986">
    <property type="entry name" value="PRC_RimM"/>
    <property type="match status" value="1"/>
</dbReference>
<dbReference type="Pfam" id="PF01782">
    <property type="entry name" value="RimM"/>
    <property type="match status" value="1"/>
</dbReference>
<dbReference type="SUPFAM" id="SSF50346">
    <property type="entry name" value="PRC-barrel domain"/>
    <property type="match status" value="1"/>
</dbReference>
<dbReference type="SUPFAM" id="SSF50447">
    <property type="entry name" value="Translation proteins"/>
    <property type="match status" value="1"/>
</dbReference>
<organism>
    <name type="scientific">Bacteroides fragilis (strain YCH46)</name>
    <dbReference type="NCBI Taxonomy" id="295405"/>
    <lineage>
        <taxon>Bacteria</taxon>
        <taxon>Pseudomonadati</taxon>
        <taxon>Bacteroidota</taxon>
        <taxon>Bacteroidia</taxon>
        <taxon>Bacteroidales</taxon>
        <taxon>Bacteroidaceae</taxon>
        <taxon>Bacteroides</taxon>
    </lineage>
</organism>
<proteinExistence type="inferred from homology"/>
<accession>Q64PY7</accession>
<feature type="chain" id="PRO_0000351720" description="Ribosome maturation factor RimM">
    <location>
        <begin position="1"/>
        <end position="180"/>
    </location>
</feature>
<feature type="domain" description="PRC barrel" evidence="1">
    <location>
        <begin position="97"/>
        <end position="169"/>
    </location>
</feature>